<accession>Q57RA8</accession>
<dbReference type="EC" id="2.8.4.4" evidence="1"/>
<dbReference type="EMBL" id="AE017220">
    <property type="protein sequence ID" value="AAX64753.1"/>
    <property type="molecule type" value="Genomic_DNA"/>
</dbReference>
<dbReference type="RefSeq" id="WP_000073317.1">
    <property type="nucleotide sequence ID" value="NC_006905.1"/>
</dbReference>
<dbReference type="SMR" id="Q57RA8"/>
<dbReference type="KEGG" id="sec:SCH_0847"/>
<dbReference type="HOGENOM" id="CLU_018697_0_0_6"/>
<dbReference type="Proteomes" id="UP000000538">
    <property type="component" value="Chromosome"/>
</dbReference>
<dbReference type="GO" id="GO:0005829">
    <property type="term" value="C:cytosol"/>
    <property type="evidence" value="ECO:0007669"/>
    <property type="project" value="TreeGrafter"/>
</dbReference>
<dbReference type="GO" id="GO:0051539">
    <property type="term" value="F:4 iron, 4 sulfur cluster binding"/>
    <property type="evidence" value="ECO:0007669"/>
    <property type="project" value="UniProtKB-UniRule"/>
</dbReference>
<dbReference type="GO" id="GO:0035599">
    <property type="term" value="F:aspartic acid methylthiotransferase activity"/>
    <property type="evidence" value="ECO:0007669"/>
    <property type="project" value="TreeGrafter"/>
</dbReference>
<dbReference type="GO" id="GO:0046872">
    <property type="term" value="F:metal ion binding"/>
    <property type="evidence" value="ECO:0007669"/>
    <property type="project" value="UniProtKB-KW"/>
</dbReference>
<dbReference type="GO" id="GO:0103039">
    <property type="term" value="F:protein methylthiotransferase activity"/>
    <property type="evidence" value="ECO:0007669"/>
    <property type="project" value="UniProtKB-EC"/>
</dbReference>
<dbReference type="GO" id="GO:0006400">
    <property type="term" value="P:tRNA modification"/>
    <property type="evidence" value="ECO:0007669"/>
    <property type="project" value="InterPro"/>
</dbReference>
<dbReference type="CDD" id="cd01335">
    <property type="entry name" value="Radical_SAM"/>
    <property type="match status" value="1"/>
</dbReference>
<dbReference type="FunFam" id="2.40.50.140:FF:000060">
    <property type="entry name" value="Ribosomal protein S12 methylthiotransferase RimO"/>
    <property type="match status" value="1"/>
</dbReference>
<dbReference type="FunFam" id="3.40.50.12160:FF:000002">
    <property type="entry name" value="Ribosomal protein S12 methylthiotransferase RimO"/>
    <property type="match status" value="1"/>
</dbReference>
<dbReference type="FunFam" id="3.80.30.20:FF:000001">
    <property type="entry name" value="tRNA-2-methylthio-N(6)-dimethylallyladenosine synthase 2"/>
    <property type="match status" value="1"/>
</dbReference>
<dbReference type="Gene3D" id="3.40.50.12160">
    <property type="entry name" value="Methylthiotransferase, N-terminal domain"/>
    <property type="match status" value="1"/>
</dbReference>
<dbReference type="Gene3D" id="2.40.50.140">
    <property type="entry name" value="Nucleic acid-binding proteins"/>
    <property type="match status" value="1"/>
</dbReference>
<dbReference type="Gene3D" id="3.80.30.20">
    <property type="entry name" value="tm_1862 like domain"/>
    <property type="match status" value="1"/>
</dbReference>
<dbReference type="HAMAP" id="MF_01865">
    <property type="entry name" value="MTTase_RimO"/>
    <property type="match status" value="1"/>
</dbReference>
<dbReference type="InterPro" id="IPR006638">
    <property type="entry name" value="Elp3/MiaA/NifB-like_rSAM"/>
</dbReference>
<dbReference type="InterPro" id="IPR005839">
    <property type="entry name" value="Methylthiotransferase"/>
</dbReference>
<dbReference type="InterPro" id="IPR020612">
    <property type="entry name" value="Methylthiotransferase_CS"/>
</dbReference>
<dbReference type="InterPro" id="IPR013848">
    <property type="entry name" value="Methylthiotransferase_N"/>
</dbReference>
<dbReference type="InterPro" id="IPR038135">
    <property type="entry name" value="Methylthiotransferase_N_sf"/>
</dbReference>
<dbReference type="InterPro" id="IPR012340">
    <property type="entry name" value="NA-bd_OB-fold"/>
</dbReference>
<dbReference type="InterPro" id="IPR005840">
    <property type="entry name" value="Ribosomal_uS12_MeSTrfase_RimO"/>
</dbReference>
<dbReference type="InterPro" id="IPR007197">
    <property type="entry name" value="rSAM"/>
</dbReference>
<dbReference type="InterPro" id="IPR023404">
    <property type="entry name" value="rSAM_horseshoe"/>
</dbReference>
<dbReference type="InterPro" id="IPR002792">
    <property type="entry name" value="TRAM_dom"/>
</dbReference>
<dbReference type="NCBIfam" id="TIGR01125">
    <property type="entry name" value="30S ribosomal protein S12 methylthiotransferase RimO"/>
    <property type="match status" value="1"/>
</dbReference>
<dbReference type="NCBIfam" id="TIGR00089">
    <property type="entry name" value="MiaB/RimO family radical SAM methylthiotransferase"/>
    <property type="match status" value="1"/>
</dbReference>
<dbReference type="PANTHER" id="PTHR43837">
    <property type="entry name" value="RIBOSOMAL PROTEIN S12 METHYLTHIOTRANSFERASE RIMO"/>
    <property type="match status" value="1"/>
</dbReference>
<dbReference type="PANTHER" id="PTHR43837:SF1">
    <property type="entry name" value="RIBOSOMAL PROTEIN US12 METHYLTHIOTRANSFERASE RIMO"/>
    <property type="match status" value="1"/>
</dbReference>
<dbReference type="Pfam" id="PF04055">
    <property type="entry name" value="Radical_SAM"/>
    <property type="match status" value="1"/>
</dbReference>
<dbReference type="Pfam" id="PF18693">
    <property type="entry name" value="TRAM_2"/>
    <property type="match status" value="1"/>
</dbReference>
<dbReference type="Pfam" id="PF00919">
    <property type="entry name" value="UPF0004"/>
    <property type="match status" value="1"/>
</dbReference>
<dbReference type="SFLD" id="SFLDG01082">
    <property type="entry name" value="B12-binding_domain_containing"/>
    <property type="match status" value="1"/>
</dbReference>
<dbReference type="SFLD" id="SFLDG01061">
    <property type="entry name" value="methylthiotransferase"/>
    <property type="match status" value="1"/>
</dbReference>
<dbReference type="SFLD" id="SFLDF00274">
    <property type="entry name" value="ribosomal_protein_S12_methylth"/>
    <property type="match status" value="1"/>
</dbReference>
<dbReference type="SMART" id="SM00729">
    <property type="entry name" value="Elp3"/>
    <property type="match status" value="1"/>
</dbReference>
<dbReference type="SUPFAM" id="SSF102114">
    <property type="entry name" value="Radical SAM enzymes"/>
    <property type="match status" value="1"/>
</dbReference>
<dbReference type="PROSITE" id="PS51449">
    <property type="entry name" value="MTTASE_N"/>
    <property type="match status" value="1"/>
</dbReference>
<dbReference type="PROSITE" id="PS01278">
    <property type="entry name" value="MTTASE_RADICAL"/>
    <property type="match status" value="1"/>
</dbReference>
<dbReference type="PROSITE" id="PS51918">
    <property type="entry name" value="RADICAL_SAM"/>
    <property type="match status" value="1"/>
</dbReference>
<dbReference type="PROSITE" id="PS50926">
    <property type="entry name" value="TRAM"/>
    <property type="match status" value="1"/>
</dbReference>
<organism>
    <name type="scientific">Salmonella choleraesuis (strain SC-B67)</name>
    <dbReference type="NCBI Taxonomy" id="321314"/>
    <lineage>
        <taxon>Bacteria</taxon>
        <taxon>Pseudomonadati</taxon>
        <taxon>Pseudomonadota</taxon>
        <taxon>Gammaproteobacteria</taxon>
        <taxon>Enterobacterales</taxon>
        <taxon>Enterobacteriaceae</taxon>
        <taxon>Salmonella</taxon>
    </lineage>
</organism>
<reference key="1">
    <citation type="journal article" date="2005" name="Nucleic Acids Res.">
        <title>The genome sequence of Salmonella enterica serovar Choleraesuis, a highly invasive and resistant zoonotic pathogen.</title>
        <authorList>
            <person name="Chiu C.-H."/>
            <person name="Tang P."/>
            <person name="Chu C."/>
            <person name="Hu S."/>
            <person name="Bao Q."/>
            <person name="Yu J."/>
            <person name="Chou Y.-Y."/>
            <person name="Wang H.-S."/>
            <person name="Lee Y.-S."/>
        </authorList>
    </citation>
    <scope>NUCLEOTIDE SEQUENCE [LARGE SCALE GENOMIC DNA]</scope>
    <source>
        <strain>SC-B67</strain>
    </source>
</reference>
<proteinExistence type="inferred from homology"/>
<protein>
    <recommendedName>
        <fullName evidence="1">Ribosomal protein uS12 methylthiotransferase RimO</fullName>
        <shortName evidence="1">uS12 MTTase</shortName>
        <shortName evidence="1">uS12 methylthiotransferase</shortName>
        <ecNumber evidence="1">2.8.4.4</ecNumber>
    </recommendedName>
    <alternativeName>
        <fullName evidence="1">Ribosomal protein uS12 (aspartate-C(3))-methylthiotransferase</fullName>
    </alternativeName>
    <alternativeName>
        <fullName evidence="1">Ribosome maturation factor RimO</fullName>
    </alternativeName>
</protein>
<comment type="function">
    <text evidence="1">Catalyzes the methylthiolation of an aspartic acid residue of ribosomal protein uS12.</text>
</comment>
<comment type="catalytic activity">
    <reaction evidence="1">
        <text>L-aspartate(89)-[ribosomal protein uS12]-hydrogen + (sulfur carrier)-SH + AH2 + 2 S-adenosyl-L-methionine = 3-methylsulfanyl-L-aspartate(89)-[ribosomal protein uS12]-hydrogen + (sulfur carrier)-H + 5'-deoxyadenosine + L-methionine + A + S-adenosyl-L-homocysteine + 2 H(+)</text>
        <dbReference type="Rhea" id="RHEA:37087"/>
        <dbReference type="Rhea" id="RHEA-COMP:10460"/>
        <dbReference type="Rhea" id="RHEA-COMP:10461"/>
        <dbReference type="Rhea" id="RHEA-COMP:14737"/>
        <dbReference type="Rhea" id="RHEA-COMP:14739"/>
        <dbReference type="ChEBI" id="CHEBI:13193"/>
        <dbReference type="ChEBI" id="CHEBI:15378"/>
        <dbReference type="ChEBI" id="CHEBI:17319"/>
        <dbReference type="ChEBI" id="CHEBI:17499"/>
        <dbReference type="ChEBI" id="CHEBI:29917"/>
        <dbReference type="ChEBI" id="CHEBI:29961"/>
        <dbReference type="ChEBI" id="CHEBI:57844"/>
        <dbReference type="ChEBI" id="CHEBI:57856"/>
        <dbReference type="ChEBI" id="CHEBI:59789"/>
        <dbReference type="ChEBI" id="CHEBI:64428"/>
        <dbReference type="ChEBI" id="CHEBI:73599"/>
        <dbReference type="EC" id="2.8.4.4"/>
    </reaction>
</comment>
<comment type="cofactor">
    <cofactor evidence="1">
        <name>[4Fe-4S] cluster</name>
        <dbReference type="ChEBI" id="CHEBI:49883"/>
    </cofactor>
    <text evidence="1">Binds 2 [4Fe-4S] clusters. One cluster is coordinated with 3 cysteines and an exchangeable S-adenosyl-L-methionine.</text>
</comment>
<comment type="subcellular location">
    <subcellularLocation>
        <location evidence="1">Cytoplasm</location>
    </subcellularLocation>
</comment>
<comment type="similarity">
    <text evidence="1">Belongs to the methylthiotransferase family. RimO subfamily.</text>
</comment>
<gene>
    <name evidence="1" type="primary">rimO</name>
    <name type="ordered locus">SCH_0847</name>
</gene>
<sequence>MSNVTHQPKIGFVSLGCPKNLVDSERILTELRTEGYDVVPRYDDADMVIVNTCGFIDSAVQESLEAIGEALNENGKVIVTGCLGAKEDQIREVHPKVLEITGPHSYEQVLQHVHHYVPKPKHNPFLSLVPEQGVKLTPRHYAYLKISEGCNHRCTFCIIPSMRGDLVSRPIGDVLSEAKRLVDAGVKEILVISQDTSAYGVDVKHRTGFHNGEPVKTSMVSLCEQLSKLGVWTRLHYVYPYPHVDDVIPLMAEGKILPYLDIPLQHASPRILKLMKRPGSVDRQLARIKQWREICPELTLRSTFIVGFPGETEEDFQMLLDFLKEARLDRVGCFKYSPVEGAGANELPDQVPEEVKEERWNRFMQLQQQISAERLQEKVGREILVIVDEVDEEGAIGRSMADAPEIDGAVYLNGETNVKPGDIVRVKVENADEYDLWGSRV</sequence>
<keyword id="KW-0004">4Fe-4S</keyword>
<keyword id="KW-0963">Cytoplasm</keyword>
<keyword id="KW-0408">Iron</keyword>
<keyword id="KW-0411">Iron-sulfur</keyword>
<keyword id="KW-0479">Metal-binding</keyword>
<keyword id="KW-0949">S-adenosyl-L-methionine</keyword>
<keyword id="KW-0808">Transferase</keyword>
<evidence type="ECO:0000255" key="1">
    <source>
        <dbReference type="HAMAP-Rule" id="MF_01865"/>
    </source>
</evidence>
<evidence type="ECO:0000255" key="2">
    <source>
        <dbReference type="PROSITE-ProRule" id="PRU01266"/>
    </source>
</evidence>
<feature type="chain" id="PRO_0000374987" description="Ribosomal protein uS12 methylthiotransferase RimO">
    <location>
        <begin position="1"/>
        <end position="441"/>
    </location>
</feature>
<feature type="domain" description="MTTase N-terminal" evidence="1">
    <location>
        <begin position="8"/>
        <end position="118"/>
    </location>
</feature>
<feature type="domain" description="Radical SAM core" evidence="2">
    <location>
        <begin position="136"/>
        <end position="373"/>
    </location>
</feature>
<feature type="domain" description="TRAM" evidence="1">
    <location>
        <begin position="376"/>
        <end position="441"/>
    </location>
</feature>
<feature type="binding site" evidence="1">
    <location>
        <position position="17"/>
    </location>
    <ligand>
        <name>[4Fe-4S] cluster</name>
        <dbReference type="ChEBI" id="CHEBI:49883"/>
        <label>1</label>
    </ligand>
</feature>
<feature type="binding site" evidence="1">
    <location>
        <position position="53"/>
    </location>
    <ligand>
        <name>[4Fe-4S] cluster</name>
        <dbReference type="ChEBI" id="CHEBI:49883"/>
        <label>1</label>
    </ligand>
</feature>
<feature type="binding site" evidence="1">
    <location>
        <position position="82"/>
    </location>
    <ligand>
        <name>[4Fe-4S] cluster</name>
        <dbReference type="ChEBI" id="CHEBI:49883"/>
        <label>1</label>
    </ligand>
</feature>
<feature type="binding site" evidence="1">
    <location>
        <position position="150"/>
    </location>
    <ligand>
        <name>[4Fe-4S] cluster</name>
        <dbReference type="ChEBI" id="CHEBI:49883"/>
        <label>2</label>
        <note>4Fe-4S-S-AdoMet</note>
    </ligand>
</feature>
<feature type="binding site" evidence="1">
    <location>
        <position position="154"/>
    </location>
    <ligand>
        <name>[4Fe-4S] cluster</name>
        <dbReference type="ChEBI" id="CHEBI:49883"/>
        <label>2</label>
        <note>4Fe-4S-S-AdoMet</note>
    </ligand>
</feature>
<feature type="binding site" evidence="1">
    <location>
        <position position="157"/>
    </location>
    <ligand>
        <name>[4Fe-4S] cluster</name>
        <dbReference type="ChEBI" id="CHEBI:49883"/>
        <label>2</label>
        <note>4Fe-4S-S-AdoMet</note>
    </ligand>
</feature>
<name>RIMO_SALCH</name>